<evidence type="ECO:0000255" key="1">
    <source>
        <dbReference type="HAMAP-Rule" id="MF_01006"/>
    </source>
</evidence>
<comment type="function">
    <text evidence="1">Catalyzes the dephosphorylation of undecaprenyl diphosphate (UPP). Confers resistance to bacitracin.</text>
</comment>
<comment type="catalytic activity">
    <reaction evidence="1">
        <text>di-trans,octa-cis-undecaprenyl diphosphate + H2O = di-trans,octa-cis-undecaprenyl phosphate + phosphate + H(+)</text>
        <dbReference type="Rhea" id="RHEA:28094"/>
        <dbReference type="ChEBI" id="CHEBI:15377"/>
        <dbReference type="ChEBI" id="CHEBI:15378"/>
        <dbReference type="ChEBI" id="CHEBI:43474"/>
        <dbReference type="ChEBI" id="CHEBI:58405"/>
        <dbReference type="ChEBI" id="CHEBI:60392"/>
        <dbReference type="EC" id="3.6.1.27"/>
    </reaction>
</comment>
<comment type="subcellular location">
    <subcellularLocation>
        <location evidence="1">Cell inner membrane</location>
        <topology evidence="1">Multi-pass membrane protein</topology>
    </subcellularLocation>
</comment>
<comment type="miscellaneous">
    <text>Bacitracin is thought to be involved in the inhibition of peptidoglycan synthesis by sequestering undecaprenyl diphosphate, thereby reducing the pool of lipid carrier available.</text>
</comment>
<comment type="similarity">
    <text evidence="1">Belongs to the UppP family.</text>
</comment>
<protein>
    <recommendedName>
        <fullName evidence="1">Undecaprenyl-diphosphatase</fullName>
        <ecNumber evidence="1">3.6.1.27</ecNumber>
    </recommendedName>
    <alternativeName>
        <fullName evidence="1">Bacitracin resistance protein</fullName>
    </alternativeName>
    <alternativeName>
        <fullName evidence="1">Undecaprenyl pyrophosphate phosphatase</fullName>
    </alternativeName>
</protein>
<feature type="chain" id="PRO_0000151242" description="Undecaprenyl-diphosphatase">
    <location>
        <begin position="1"/>
        <end position="263"/>
    </location>
</feature>
<feature type="transmembrane region" description="Helical" evidence="1">
    <location>
        <begin position="38"/>
        <end position="58"/>
    </location>
</feature>
<feature type="transmembrane region" description="Helical" evidence="1">
    <location>
        <begin position="75"/>
        <end position="95"/>
    </location>
</feature>
<feature type="transmembrane region" description="Helical" evidence="1">
    <location>
        <begin position="108"/>
        <end position="128"/>
    </location>
</feature>
<feature type="transmembrane region" description="Helical" evidence="1">
    <location>
        <begin position="135"/>
        <end position="155"/>
    </location>
</feature>
<feature type="transmembrane region" description="Helical" evidence="1">
    <location>
        <begin position="181"/>
        <end position="201"/>
    </location>
</feature>
<feature type="transmembrane region" description="Helical" evidence="1">
    <location>
        <begin position="217"/>
        <end position="237"/>
    </location>
</feature>
<feature type="transmembrane region" description="Helical" evidence="1">
    <location>
        <begin position="242"/>
        <end position="262"/>
    </location>
</feature>
<reference key="1">
    <citation type="journal article" date="2002" name="Nature">
        <title>Comparison of the genomes of two Xanthomonas pathogens with differing host specificities.</title>
        <authorList>
            <person name="da Silva A.C.R."/>
            <person name="Ferro J.A."/>
            <person name="Reinach F.C."/>
            <person name="Farah C.S."/>
            <person name="Furlan L.R."/>
            <person name="Quaggio R.B."/>
            <person name="Monteiro-Vitorello C.B."/>
            <person name="Van Sluys M.A."/>
            <person name="Almeida N.F. Jr."/>
            <person name="Alves L.M.C."/>
            <person name="do Amaral A.M."/>
            <person name="Bertolini M.C."/>
            <person name="Camargo L.E.A."/>
            <person name="Camarotte G."/>
            <person name="Cannavan F."/>
            <person name="Cardozo J."/>
            <person name="Chambergo F."/>
            <person name="Ciapina L.P."/>
            <person name="Cicarelli R.M.B."/>
            <person name="Coutinho L.L."/>
            <person name="Cursino-Santos J.R."/>
            <person name="El-Dorry H."/>
            <person name="Faria J.B."/>
            <person name="Ferreira A.J.S."/>
            <person name="Ferreira R.C.C."/>
            <person name="Ferro M.I.T."/>
            <person name="Formighieri E.F."/>
            <person name="Franco M.C."/>
            <person name="Greggio C.C."/>
            <person name="Gruber A."/>
            <person name="Katsuyama A.M."/>
            <person name="Kishi L.T."/>
            <person name="Leite R.P."/>
            <person name="Lemos E.G.M."/>
            <person name="Lemos M.V.F."/>
            <person name="Locali E.C."/>
            <person name="Machado M.A."/>
            <person name="Madeira A.M.B.N."/>
            <person name="Martinez-Rossi N.M."/>
            <person name="Martins E.C."/>
            <person name="Meidanis J."/>
            <person name="Menck C.F.M."/>
            <person name="Miyaki C.Y."/>
            <person name="Moon D.H."/>
            <person name="Moreira L.M."/>
            <person name="Novo M.T.M."/>
            <person name="Okura V.K."/>
            <person name="Oliveira M.C."/>
            <person name="Oliveira V.R."/>
            <person name="Pereira H.A."/>
            <person name="Rossi A."/>
            <person name="Sena J.A.D."/>
            <person name="Silva C."/>
            <person name="de Souza R.F."/>
            <person name="Spinola L.A.F."/>
            <person name="Takita M.A."/>
            <person name="Tamura R.E."/>
            <person name="Teixeira E.C."/>
            <person name="Tezza R.I.D."/>
            <person name="Trindade dos Santos M."/>
            <person name="Truffi D."/>
            <person name="Tsai S.M."/>
            <person name="White F.F."/>
            <person name="Setubal J.C."/>
            <person name="Kitajima J.P."/>
        </authorList>
    </citation>
    <scope>NUCLEOTIDE SEQUENCE [LARGE SCALE GENOMIC DNA]</scope>
    <source>
        <strain>ATCC 33913 / DSM 3586 / NCPPB 528 / LMG 568 / P 25</strain>
    </source>
</reference>
<gene>
    <name evidence="1" type="primary">uppP</name>
    <name type="synonym">bacA</name>
    <name type="synonym">upk</name>
    <name type="ordered locus">XCC0184</name>
</gene>
<organism>
    <name type="scientific">Xanthomonas campestris pv. campestris (strain ATCC 33913 / DSM 3586 / NCPPB 528 / LMG 568 / P 25)</name>
    <dbReference type="NCBI Taxonomy" id="190485"/>
    <lineage>
        <taxon>Bacteria</taxon>
        <taxon>Pseudomonadati</taxon>
        <taxon>Pseudomonadota</taxon>
        <taxon>Gammaproteobacteria</taxon>
        <taxon>Lysobacterales</taxon>
        <taxon>Lysobacteraceae</taxon>
        <taxon>Xanthomonas</taxon>
    </lineage>
</organism>
<keyword id="KW-0046">Antibiotic resistance</keyword>
<keyword id="KW-0997">Cell inner membrane</keyword>
<keyword id="KW-1003">Cell membrane</keyword>
<keyword id="KW-0133">Cell shape</keyword>
<keyword id="KW-0961">Cell wall biogenesis/degradation</keyword>
<keyword id="KW-0378">Hydrolase</keyword>
<keyword id="KW-0472">Membrane</keyword>
<keyword id="KW-0573">Peptidoglycan synthesis</keyword>
<keyword id="KW-1185">Reference proteome</keyword>
<keyword id="KW-0812">Transmembrane</keyword>
<keyword id="KW-1133">Transmembrane helix</keyword>
<name>UPPP_XANCP</name>
<accession>Q8PDZ9</accession>
<proteinExistence type="inferred from homology"/>
<sequence>MSDLISALLLGILEGLTEFLPISSTGHLLIAEQWLGRRSDFFNIVIQAGAILAICLALRQKLWTLATGLGERANRDYVLKIGVAFLVTAVVGLIVRKAGWQLPETIQPVAWALLIGGVWMLVAEHFAGKLPERDVVTWKVAIAVGLAQVVAGVFPGTSRSASAIFLAMLLGLSKRSAAADFVFMVGIPTMFAASGYALLEMYKEGGFGSENWTDVSVAFIAATLTGFVVVKWLLGYIKKHRFTVFAVYRILLGAALLLWLPAA</sequence>
<dbReference type="EC" id="3.6.1.27" evidence="1"/>
<dbReference type="EMBL" id="AE008922">
    <property type="protein sequence ID" value="AAM39503.1"/>
    <property type="molecule type" value="Genomic_DNA"/>
</dbReference>
<dbReference type="RefSeq" id="NP_635579.1">
    <property type="nucleotide sequence ID" value="NC_003902.1"/>
</dbReference>
<dbReference type="RefSeq" id="WP_011035441.1">
    <property type="nucleotide sequence ID" value="NC_003902.1"/>
</dbReference>
<dbReference type="SMR" id="Q8PDZ9"/>
<dbReference type="STRING" id="190485.XCC0184"/>
<dbReference type="EnsemblBacteria" id="AAM39503">
    <property type="protein sequence ID" value="AAM39503"/>
    <property type="gene ID" value="XCC0184"/>
</dbReference>
<dbReference type="KEGG" id="xcc:XCC0184"/>
<dbReference type="PATRIC" id="fig|190485.4.peg.208"/>
<dbReference type="eggNOG" id="COG1968">
    <property type="taxonomic scope" value="Bacteria"/>
</dbReference>
<dbReference type="HOGENOM" id="CLU_060296_2_0_6"/>
<dbReference type="OrthoDB" id="9808289at2"/>
<dbReference type="Proteomes" id="UP000001010">
    <property type="component" value="Chromosome"/>
</dbReference>
<dbReference type="GO" id="GO:0005886">
    <property type="term" value="C:plasma membrane"/>
    <property type="evidence" value="ECO:0000318"/>
    <property type="project" value="GO_Central"/>
</dbReference>
<dbReference type="GO" id="GO:0050380">
    <property type="term" value="F:undecaprenyl-diphosphatase activity"/>
    <property type="evidence" value="ECO:0000318"/>
    <property type="project" value="GO_Central"/>
</dbReference>
<dbReference type="GO" id="GO:0071555">
    <property type="term" value="P:cell wall organization"/>
    <property type="evidence" value="ECO:0007669"/>
    <property type="project" value="UniProtKB-KW"/>
</dbReference>
<dbReference type="GO" id="GO:0009252">
    <property type="term" value="P:peptidoglycan biosynthetic process"/>
    <property type="evidence" value="ECO:0007669"/>
    <property type="project" value="UniProtKB-KW"/>
</dbReference>
<dbReference type="GO" id="GO:0000270">
    <property type="term" value="P:peptidoglycan metabolic process"/>
    <property type="evidence" value="ECO:0000318"/>
    <property type="project" value="GO_Central"/>
</dbReference>
<dbReference type="GO" id="GO:0008360">
    <property type="term" value="P:regulation of cell shape"/>
    <property type="evidence" value="ECO:0007669"/>
    <property type="project" value="UniProtKB-KW"/>
</dbReference>
<dbReference type="GO" id="GO:0046677">
    <property type="term" value="P:response to antibiotic"/>
    <property type="evidence" value="ECO:0007669"/>
    <property type="project" value="UniProtKB-UniRule"/>
</dbReference>
<dbReference type="HAMAP" id="MF_01006">
    <property type="entry name" value="Undec_diphosphatase"/>
    <property type="match status" value="1"/>
</dbReference>
<dbReference type="InterPro" id="IPR003824">
    <property type="entry name" value="UppP"/>
</dbReference>
<dbReference type="NCBIfam" id="NF001390">
    <property type="entry name" value="PRK00281.1-4"/>
    <property type="match status" value="1"/>
</dbReference>
<dbReference type="PANTHER" id="PTHR30622">
    <property type="entry name" value="UNDECAPRENYL-DIPHOSPHATASE"/>
    <property type="match status" value="1"/>
</dbReference>
<dbReference type="PANTHER" id="PTHR30622:SF3">
    <property type="entry name" value="UNDECAPRENYL-DIPHOSPHATASE"/>
    <property type="match status" value="1"/>
</dbReference>
<dbReference type="Pfam" id="PF02673">
    <property type="entry name" value="BacA"/>
    <property type="match status" value="1"/>
</dbReference>